<feature type="chain" id="PRO_0000415984" description="Mini-ribonuclease 3">
    <location>
        <begin position="1"/>
        <end position="132"/>
    </location>
</feature>
<feature type="active site" evidence="1">
    <location>
        <position position="17"/>
    </location>
</feature>
<sequence>MRDYKQLNGLALAYVGDAIYEIYIRDYLVSLGQTKPNVLHRMATHYVSAKAQASLMQAMLAGEMLTEEEEVMYKRGRNAKSHTFAKNADVTTYRVATGFESLMGYLHLTQQKERLEELINWCIKKVGETNEK</sequence>
<comment type="function">
    <text evidence="1">Involved in correct processing of both the 5' and 3' ends of 23S rRNA precursor. Processes 30S rRNA precursor transcript even in absence of ribonuclease 3 (Rnc); Rnc processes 30S rRNA into smaller rRNA precursors.</text>
</comment>
<comment type="cofactor">
    <cofactor evidence="1">
        <name>Mg(2+)</name>
        <dbReference type="ChEBI" id="CHEBI:18420"/>
    </cofactor>
</comment>
<comment type="subunit">
    <text evidence="1">Homodimer.</text>
</comment>
<comment type="subcellular location">
    <subcellularLocation>
        <location evidence="1">Cytoplasm</location>
    </subcellularLocation>
</comment>
<comment type="similarity">
    <text evidence="1">Belongs to the MrnC RNase family.</text>
</comment>
<name>MRNC_ENTFA</name>
<protein>
    <recommendedName>
        <fullName evidence="1">Mini-ribonuclease 3</fullName>
        <shortName evidence="1">Mini-3</shortName>
        <shortName evidence="1">Mini-RNase 3</shortName>
        <ecNumber evidence="1">3.1.26.-</ecNumber>
    </recommendedName>
    <alternativeName>
        <fullName evidence="1">Mini-RNase III</fullName>
        <shortName evidence="1">Mini-III</shortName>
    </alternativeName>
</protein>
<reference key="1">
    <citation type="journal article" date="2003" name="Science">
        <title>Role of mobile DNA in the evolution of vancomycin-resistant Enterococcus faecalis.</title>
        <authorList>
            <person name="Paulsen I.T."/>
            <person name="Banerjei L."/>
            <person name="Myers G.S.A."/>
            <person name="Nelson K.E."/>
            <person name="Seshadri R."/>
            <person name="Read T.D."/>
            <person name="Fouts D.E."/>
            <person name="Eisen J.A."/>
            <person name="Gill S.R."/>
            <person name="Heidelberg J.F."/>
            <person name="Tettelin H."/>
            <person name="Dodson R.J."/>
            <person name="Umayam L.A."/>
            <person name="Brinkac L.M."/>
            <person name="Beanan M.J."/>
            <person name="Daugherty S.C."/>
            <person name="DeBoy R.T."/>
            <person name="Durkin S.A."/>
            <person name="Kolonay J.F."/>
            <person name="Madupu R."/>
            <person name="Nelson W.C."/>
            <person name="Vamathevan J.J."/>
            <person name="Tran B."/>
            <person name="Upton J."/>
            <person name="Hansen T."/>
            <person name="Shetty J."/>
            <person name="Khouri H.M."/>
            <person name="Utterback T.R."/>
            <person name="Radune D."/>
            <person name="Ketchum K.A."/>
            <person name="Dougherty B.A."/>
            <person name="Fraser C.M."/>
        </authorList>
    </citation>
    <scope>NUCLEOTIDE SEQUENCE [LARGE SCALE GENOMIC DNA]</scope>
    <source>
        <strain>ATCC 700802 / V583</strain>
    </source>
</reference>
<gene>
    <name evidence="1" type="primary">mrnC</name>
    <name type="ordered locus">EF_0046</name>
</gene>
<keyword id="KW-0963">Cytoplasm</keyword>
<keyword id="KW-0255">Endonuclease</keyword>
<keyword id="KW-0378">Hydrolase</keyword>
<keyword id="KW-0460">Magnesium</keyword>
<keyword id="KW-0540">Nuclease</keyword>
<keyword id="KW-1185">Reference proteome</keyword>
<keyword id="KW-0690">Ribosome biogenesis</keyword>
<keyword id="KW-0694">RNA-binding</keyword>
<keyword id="KW-0698">rRNA processing</keyword>
<keyword id="KW-0699">rRNA-binding</keyword>
<accession>Q839V4</accession>
<organism>
    <name type="scientific">Enterococcus faecalis (strain ATCC 700802 / V583)</name>
    <dbReference type="NCBI Taxonomy" id="226185"/>
    <lineage>
        <taxon>Bacteria</taxon>
        <taxon>Bacillati</taxon>
        <taxon>Bacillota</taxon>
        <taxon>Bacilli</taxon>
        <taxon>Lactobacillales</taxon>
        <taxon>Enterococcaceae</taxon>
        <taxon>Enterococcus</taxon>
    </lineage>
</organism>
<proteinExistence type="inferred from homology"/>
<dbReference type="EC" id="3.1.26.-" evidence="1"/>
<dbReference type="EMBL" id="AE016830">
    <property type="protein sequence ID" value="AAO79928.1"/>
    <property type="molecule type" value="Genomic_DNA"/>
</dbReference>
<dbReference type="RefSeq" id="NP_813856.1">
    <property type="nucleotide sequence ID" value="NC_004668.1"/>
</dbReference>
<dbReference type="RefSeq" id="WP_002356056.1">
    <property type="nucleotide sequence ID" value="NZ_KE136524.1"/>
</dbReference>
<dbReference type="SMR" id="Q839V4"/>
<dbReference type="STRING" id="226185.EF_0046"/>
<dbReference type="EnsemblBacteria" id="AAO79928">
    <property type="protein sequence ID" value="AAO79928"/>
    <property type="gene ID" value="EF_0046"/>
</dbReference>
<dbReference type="KEGG" id="efa:EF0046"/>
<dbReference type="PATRIC" id="fig|226185.45.peg.210"/>
<dbReference type="eggNOG" id="COG1939">
    <property type="taxonomic scope" value="Bacteria"/>
</dbReference>
<dbReference type="HOGENOM" id="CLU_091169_2_0_9"/>
<dbReference type="Proteomes" id="UP000001415">
    <property type="component" value="Chromosome"/>
</dbReference>
<dbReference type="GO" id="GO:0005737">
    <property type="term" value="C:cytoplasm"/>
    <property type="evidence" value="ECO:0007669"/>
    <property type="project" value="UniProtKB-SubCell"/>
</dbReference>
<dbReference type="GO" id="GO:0004525">
    <property type="term" value="F:ribonuclease III activity"/>
    <property type="evidence" value="ECO:0007669"/>
    <property type="project" value="InterPro"/>
</dbReference>
<dbReference type="GO" id="GO:0019843">
    <property type="term" value="F:rRNA binding"/>
    <property type="evidence" value="ECO:0007669"/>
    <property type="project" value="UniProtKB-UniRule"/>
</dbReference>
<dbReference type="GO" id="GO:0006364">
    <property type="term" value="P:rRNA processing"/>
    <property type="evidence" value="ECO:0007669"/>
    <property type="project" value="UniProtKB-UniRule"/>
</dbReference>
<dbReference type="CDD" id="cd00593">
    <property type="entry name" value="RIBOc"/>
    <property type="match status" value="1"/>
</dbReference>
<dbReference type="Gene3D" id="1.10.1520.10">
    <property type="entry name" value="Ribonuclease III domain"/>
    <property type="match status" value="1"/>
</dbReference>
<dbReference type="HAMAP" id="MF_01468">
    <property type="entry name" value="RNase_Mini_III"/>
    <property type="match status" value="1"/>
</dbReference>
<dbReference type="InterPro" id="IPR008226">
    <property type="entry name" value="Mini3_fam"/>
</dbReference>
<dbReference type="InterPro" id="IPR000999">
    <property type="entry name" value="RNase_III_dom"/>
</dbReference>
<dbReference type="InterPro" id="IPR036389">
    <property type="entry name" value="RNase_III_sf"/>
</dbReference>
<dbReference type="PANTHER" id="PTHR34276">
    <property type="entry name" value="MINI-RIBONUCLEASE 3"/>
    <property type="match status" value="1"/>
</dbReference>
<dbReference type="PANTHER" id="PTHR34276:SF1">
    <property type="entry name" value="MINI-RIBONUCLEASE 3"/>
    <property type="match status" value="1"/>
</dbReference>
<dbReference type="Pfam" id="PF00636">
    <property type="entry name" value="Ribonuclease_3"/>
    <property type="match status" value="1"/>
</dbReference>
<dbReference type="PIRSF" id="PIRSF005520">
    <property type="entry name" value="UCP005520"/>
    <property type="match status" value="1"/>
</dbReference>
<dbReference type="SMART" id="SM00535">
    <property type="entry name" value="RIBOc"/>
    <property type="match status" value="1"/>
</dbReference>
<dbReference type="SUPFAM" id="SSF69065">
    <property type="entry name" value="RNase III domain-like"/>
    <property type="match status" value="1"/>
</dbReference>
<evidence type="ECO:0000255" key="1">
    <source>
        <dbReference type="HAMAP-Rule" id="MF_01468"/>
    </source>
</evidence>